<keyword id="KW-0240">DNA-directed RNA polymerase</keyword>
<keyword id="KW-0548">Nucleotidyltransferase</keyword>
<keyword id="KW-1185">Reference proteome</keyword>
<keyword id="KW-0804">Transcription</keyword>
<keyword id="KW-0808">Transferase</keyword>
<evidence type="ECO:0000255" key="1">
    <source>
        <dbReference type="HAMAP-Rule" id="MF_00059"/>
    </source>
</evidence>
<evidence type="ECO:0000256" key="2">
    <source>
        <dbReference type="SAM" id="MobiDB-lite"/>
    </source>
</evidence>
<protein>
    <recommendedName>
        <fullName evidence="1">DNA-directed RNA polymerase subunit alpha</fullName>
        <shortName evidence="1">RNAP subunit alpha</shortName>
        <ecNumber evidence="1">2.7.7.6</ecNumber>
    </recommendedName>
    <alternativeName>
        <fullName evidence="1">RNA polymerase subunit alpha</fullName>
    </alternativeName>
    <alternativeName>
        <fullName evidence="1">Transcriptase subunit alpha</fullName>
    </alternativeName>
</protein>
<name>RPOA_COREF</name>
<organism>
    <name type="scientific">Corynebacterium efficiens (strain DSM 44549 / YS-314 / AJ 12310 / JCM 11189 / NBRC 100395)</name>
    <dbReference type="NCBI Taxonomy" id="196164"/>
    <lineage>
        <taxon>Bacteria</taxon>
        <taxon>Bacillati</taxon>
        <taxon>Actinomycetota</taxon>
        <taxon>Actinomycetes</taxon>
        <taxon>Mycobacteriales</taxon>
        <taxon>Corynebacteriaceae</taxon>
        <taxon>Corynebacterium</taxon>
    </lineage>
</organism>
<comment type="function">
    <text evidence="1">DNA-dependent RNA polymerase catalyzes the transcription of DNA into RNA using the four ribonucleoside triphosphates as substrates.</text>
</comment>
<comment type="catalytic activity">
    <reaction evidence="1">
        <text>RNA(n) + a ribonucleoside 5'-triphosphate = RNA(n+1) + diphosphate</text>
        <dbReference type="Rhea" id="RHEA:21248"/>
        <dbReference type="Rhea" id="RHEA-COMP:14527"/>
        <dbReference type="Rhea" id="RHEA-COMP:17342"/>
        <dbReference type="ChEBI" id="CHEBI:33019"/>
        <dbReference type="ChEBI" id="CHEBI:61557"/>
        <dbReference type="ChEBI" id="CHEBI:140395"/>
        <dbReference type="EC" id="2.7.7.6"/>
    </reaction>
</comment>
<comment type="subunit">
    <text evidence="1">Homodimer. The RNAP catalytic core consists of 2 alpha, 1 beta, 1 beta' and 1 omega subunit. When a sigma factor is associated with the core the holoenzyme is formed, which can initiate transcription.</text>
</comment>
<comment type="domain">
    <text evidence="1">The N-terminal domain is essential for RNAP assembly and basal transcription, whereas the C-terminal domain is involved in interaction with transcriptional regulators and with upstream promoter elements.</text>
</comment>
<comment type="similarity">
    <text evidence="1">Belongs to the RNA polymerase alpha chain family.</text>
</comment>
<accession>Q8FS33</accession>
<sequence length="338" mass="36784">MLISQRPTLTEEFIDSSRSKFIIEPLEPGFGYTLGNSLRRTLLSSIPGAAVTSVKIDGVLHEFTTINGIKEDVSDIILNIKGLVLSSDSDEPVIMHLSKEGPGVVTAGDIEPPADVEIHNPDLHIATLNENAKLDIELIVERGRGYVPATMTATGGDIGRIPVDQIYSPVLKVSYKVEATRVEQRTDFDKLIIDVETKNSISARDALASAGKTLVELFGLARELNVAAEGIEIGPSPQETEYIAAYSMPIEDLDFSVRSYNCLKREDIHTVGELAERAESDLLDIRNFGQKSINEVKIKLAGLGLTLKDAPEDFDPSTLEGYDAETGGYIDVEPEDAE</sequence>
<dbReference type="EC" id="2.7.7.6" evidence="1"/>
<dbReference type="EMBL" id="BA000035">
    <property type="protein sequence ID" value="BAC17382.1"/>
    <property type="molecule type" value="Genomic_DNA"/>
</dbReference>
<dbReference type="RefSeq" id="WP_006769753.1">
    <property type="nucleotide sequence ID" value="NC_004369.1"/>
</dbReference>
<dbReference type="SMR" id="Q8FS33"/>
<dbReference type="STRING" id="196164.gene:10740974"/>
<dbReference type="KEGG" id="cef:CE0572"/>
<dbReference type="eggNOG" id="COG0202">
    <property type="taxonomic scope" value="Bacteria"/>
</dbReference>
<dbReference type="HOGENOM" id="CLU_053084_0_1_11"/>
<dbReference type="OrthoDB" id="9805706at2"/>
<dbReference type="Proteomes" id="UP000001409">
    <property type="component" value="Chromosome"/>
</dbReference>
<dbReference type="GO" id="GO:0005737">
    <property type="term" value="C:cytoplasm"/>
    <property type="evidence" value="ECO:0007669"/>
    <property type="project" value="UniProtKB-ARBA"/>
</dbReference>
<dbReference type="GO" id="GO:0000428">
    <property type="term" value="C:DNA-directed RNA polymerase complex"/>
    <property type="evidence" value="ECO:0007669"/>
    <property type="project" value="UniProtKB-KW"/>
</dbReference>
<dbReference type="GO" id="GO:0003677">
    <property type="term" value="F:DNA binding"/>
    <property type="evidence" value="ECO:0007669"/>
    <property type="project" value="UniProtKB-UniRule"/>
</dbReference>
<dbReference type="GO" id="GO:0003899">
    <property type="term" value="F:DNA-directed RNA polymerase activity"/>
    <property type="evidence" value="ECO:0007669"/>
    <property type="project" value="UniProtKB-UniRule"/>
</dbReference>
<dbReference type="GO" id="GO:0046983">
    <property type="term" value="F:protein dimerization activity"/>
    <property type="evidence" value="ECO:0007669"/>
    <property type="project" value="InterPro"/>
</dbReference>
<dbReference type="GO" id="GO:0006351">
    <property type="term" value="P:DNA-templated transcription"/>
    <property type="evidence" value="ECO:0007669"/>
    <property type="project" value="UniProtKB-UniRule"/>
</dbReference>
<dbReference type="CDD" id="cd06928">
    <property type="entry name" value="RNAP_alpha_NTD"/>
    <property type="match status" value="1"/>
</dbReference>
<dbReference type="FunFam" id="1.10.150.20:FF:000001">
    <property type="entry name" value="DNA-directed RNA polymerase subunit alpha"/>
    <property type="match status" value="1"/>
</dbReference>
<dbReference type="FunFam" id="2.170.120.12:FF:000001">
    <property type="entry name" value="DNA-directed RNA polymerase subunit alpha"/>
    <property type="match status" value="1"/>
</dbReference>
<dbReference type="Gene3D" id="1.10.150.20">
    <property type="entry name" value="5' to 3' exonuclease, C-terminal subdomain"/>
    <property type="match status" value="1"/>
</dbReference>
<dbReference type="Gene3D" id="2.170.120.12">
    <property type="entry name" value="DNA-directed RNA polymerase, insert domain"/>
    <property type="match status" value="1"/>
</dbReference>
<dbReference type="Gene3D" id="3.30.1360.10">
    <property type="entry name" value="RNA polymerase, RBP11-like subunit"/>
    <property type="match status" value="1"/>
</dbReference>
<dbReference type="HAMAP" id="MF_00059">
    <property type="entry name" value="RNApol_bact_RpoA"/>
    <property type="match status" value="1"/>
</dbReference>
<dbReference type="InterPro" id="IPR011262">
    <property type="entry name" value="DNA-dir_RNA_pol_insert"/>
</dbReference>
<dbReference type="InterPro" id="IPR011263">
    <property type="entry name" value="DNA-dir_RNA_pol_RpoA/D/Rpb3"/>
</dbReference>
<dbReference type="InterPro" id="IPR011773">
    <property type="entry name" value="DNA-dir_RpoA"/>
</dbReference>
<dbReference type="InterPro" id="IPR036603">
    <property type="entry name" value="RBP11-like"/>
</dbReference>
<dbReference type="InterPro" id="IPR011260">
    <property type="entry name" value="RNAP_asu_C"/>
</dbReference>
<dbReference type="InterPro" id="IPR036643">
    <property type="entry name" value="RNApol_insert_sf"/>
</dbReference>
<dbReference type="NCBIfam" id="NF003513">
    <property type="entry name" value="PRK05182.1-2"/>
    <property type="match status" value="1"/>
</dbReference>
<dbReference type="NCBIfam" id="NF003514">
    <property type="entry name" value="PRK05182.1-4"/>
    <property type="match status" value="1"/>
</dbReference>
<dbReference type="NCBIfam" id="NF003519">
    <property type="entry name" value="PRK05182.2-5"/>
    <property type="match status" value="1"/>
</dbReference>
<dbReference type="NCBIfam" id="TIGR02027">
    <property type="entry name" value="rpoA"/>
    <property type="match status" value="1"/>
</dbReference>
<dbReference type="Pfam" id="PF01000">
    <property type="entry name" value="RNA_pol_A_bac"/>
    <property type="match status" value="1"/>
</dbReference>
<dbReference type="Pfam" id="PF03118">
    <property type="entry name" value="RNA_pol_A_CTD"/>
    <property type="match status" value="1"/>
</dbReference>
<dbReference type="Pfam" id="PF01193">
    <property type="entry name" value="RNA_pol_L"/>
    <property type="match status" value="1"/>
</dbReference>
<dbReference type="SMART" id="SM00662">
    <property type="entry name" value="RPOLD"/>
    <property type="match status" value="1"/>
</dbReference>
<dbReference type="SUPFAM" id="SSF47789">
    <property type="entry name" value="C-terminal domain of RNA polymerase alpha subunit"/>
    <property type="match status" value="1"/>
</dbReference>
<dbReference type="SUPFAM" id="SSF56553">
    <property type="entry name" value="Insert subdomain of RNA polymerase alpha subunit"/>
    <property type="match status" value="1"/>
</dbReference>
<dbReference type="SUPFAM" id="SSF55257">
    <property type="entry name" value="RBP11-like subunits of RNA polymerase"/>
    <property type="match status" value="1"/>
</dbReference>
<reference key="1">
    <citation type="journal article" date="2003" name="Genome Res.">
        <title>Comparative complete genome sequence analysis of the amino acid replacements responsible for the thermostability of Corynebacterium efficiens.</title>
        <authorList>
            <person name="Nishio Y."/>
            <person name="Nakamura Y."/>
            <person name="Kawarabayasi Y."/>
            <person name="Usuda Y."/>
            <person name="Kimura E."/>
            <person name="Sugimoto S."/>
            <person name="Matsui K."/>
            <person name="Yamagishi A."/>
            <person name="Kikuchi H."/>
            <person name="Ikeo K."/>
            <person name="Gojobori T."/>
        </authorList>
    </citation>
    <scope>NUCLEOTIDE SEQUENCE [LARGE SCALE GENOMIC DNA]</scope>
    <source>
        <strain>DSM 44549 / YS-314 / AJ 12310 / JCM 11189 / NBRC 100395</strain>
    </source>
</reference>
<feature type="chain" id="PRO_0000175298" description="DNA-directed RNA polymerase subunit alpha">
    <location>
        <begin position="1"/>
        <end position="338"/>
    </location>
</feature>
<feature type="region of interest" description="Alpha N-terminal domain (alpha-NTD)" evidence="1">
    <location>
        <begin position="1"/>
        <end position="225"/>
    </location>
</feature>
<feature type="region of interest" description="Alpha C-terminal domain (alpha-CTD)" evidence="1">
    <location>
        <begin position="242"/>
        <end position="338"/>
    </location>
</feature>
<feature type="region of interest" description="Disordered" evidence="2">
    <location>
        <begin position="314"/>
        <end position="338"/>
    </location>
</feature>
<proteinExistence type="inferred from homology"/>
<gene>
    <name evidence="1" type="primary">rpoA</name>
    <name type="ordered locus">CE0572</name>
</gene>